<dbReference type="EMBL" id="U25842">
    <property type="status" value="NOT_ANNOTATED_CDS"/>
    <property type="molecule type" value="Genomic_DNA"/>
</dbReference>
<dbReference type="SMR" id="P0C5R7"/>
<dbReference type="PaxDb" id="4932-YPR169W-A"/>
<dbReference type="EnsemblFungi" id="YPR169W-A_mRNA">
    <property type="protein sequence ID" value="YPR169W-A"/>
    <property type="gene ID" value="YPR169W-A"/>
</dbReference>
<dbReference type="AGR" id="SGD:S000028591"/>
<dbReference type="SGD" id="S000028591">
    <property type="gene designation" value="YPR169W-A"/>
</dbReference>
<dbReference type="GeneTree" id="ENSGT00940000176787"/>
<dbReference type="HOGENOM" id="CLU_115063_1_0_1"/>
<dbReference type="GO" id="GO:0016020">
    <property type="term" value="C:membrane"/>
    <property type="evidence" value="ECO:0007669"/>
    <property type="project" value="UniProtKB-SubCell"/>
</dbReference>
<dbReference type="InterPro" id="IPR056552">
    <property type="entry name" value="Ribonucl_Kappa"/>
</dbReference>
<dbReference type="Pfam" id="PF23489">
    <property type="entry name" value="V-ATPase_su_f"/>
    <property type="match status" value="1"/>
</dbReference>
<organism>
    <name type="scientific">Saccharomyces cerevisiae (strain ATCC 204508 / S288c)</name>
    <name type="common">Baker's yeast</name>
    <dbReference type="NCBI Taxonomy" id="559292"/>
    <lineage>
        <taxon>Eukaryota</taxon>
        <taxon>Fungi</taxon>
        <taxon>Dikarya</taxon>
        <taxon>Ascomycota</taxon>
        <taxon>Saccharomycotina</taxon>
        <taxon>Saccharomycetes</taxon>
        <taxon>Saccharomycetales</taxon>
        <taxon>Saccharomycetaceae</taxon>
        <taxon>Saccharomyces</taxon>
    </lineage>
</organism>
<comment type="subcellular location">
    <subcellularLocation>
        <location evidence="2">Membrane</location>
        <topology evidence="2">Single-pass membrane protein</topology>
    </subcellularLocation>
</comment>
<comment type="miscellaneous">
    <text evidence="2">Completely overlaps YPR170W-B.</text>
</comment>
<comment type="caution">
    <text evidence="3">Product of a dubious gene prediction unlikely to encode a functional protein. Because of that it is not part of the S.cerevisiae S288c complete/reference proteome set.</text>
</comment>
<reference key="1">
    <citation type="journal article" date="1997" name="Nature">
        <title>The nucleotide sequence of Saccharomyces cerevisiae chromosome XVI.</title>
        <authorList>
            <person name="Bussey H."/>
            <person name="Storms R.K."/>
            <person name="Ahmed A."/>
            <person name="Albermann K."/>
            <person name="Allen E."/>
            <person name="Ansorge W."/>
            <person name="Araujo R."/>
            <person name="Aparicio A."/>
            <person name="Barrell B.G."/>
            <person name="Badcock K."/>
            <person name="Benes V."/>
            <person name="Botstein D."/>
            <person name="Bowman S."/>
            <person name="Brueckner M."/>
            <person name="Carpenter J."/>
            <person name="Cherry J.M."/>
            <person name="Chung E."/>
            <person name="Churcher C.M."/>
            <person name="Coster F."/>
            <person name="Davis K."/>
            <person name="Davis R.W."/>
            <person name="Dietrich F.S."/>
            <person name="Delius H."/>
            <person name="DiPaolo T."/>
            <person name="Dubois E."/>
            <person name="Duesterhoeft A."/>
            <person name="Duncan M."/>
            <person name="Floeth M."/>
            <person name="Fortin N."/>
            <person name="Friesen J.D."/>
            <person name="Fritz C."/>
            <person name="Goffeau A."/>
            <person name="Hall J."/>
            <person name="Hebling U."/>
            <person name="Heumann K."/>
            <person name="Hilbert H."/>
            <person name="Hillier L.W."/>
            <person name="Hunicke-Smith S."/>
            <person name="Hyman R.W."/>
            <person name="Johnston M."/>
            <person name="Kalman S."/>
            <person name="Kleine K."/>
            <person name="Komp C."/>
            <person name="Kurdi O."/>
            <person name="Lashkari D."/>
            <person name="Lew H."/>
            <person name="Lin A."/>
            <person name="Lin D."/>
            <person name="Louis E.J."/>
            <person name="Marathe R."/>
            <person name="Messenguy F."/>
            <person name="Mewes H.-W."/>
            <person name="Mirtipati S."/>
            <person name="Moestl D."/>
            <person name="Mueller-Auer S."/>
            <person name="Namath A."/>
            <person name="Nentwich U."/>
            <person name="Oefner P."/>
            <person name="Pearson D."/>
            <person name="Petel F.X."/>
            <person name="Pohl T.M."/>
            <person name="Purnelle B."/>
            <person name="Rajandream M.A."/>
            <person name="Rechmann S."/>
            <person name="Rieger M."/>
            <person name="Riles L."/>
            <person name="Roberts D."/>
            <person name="Schaefer M."/>
            <person name="Scharfe M."/>
            <person name="Scherens B."/>
            <person name="Schramm S."/>
            <person name="Schroeder M."/>
            <person name="Sdicu A.-M."/>
            <person name="Tettelin H."/>
            <person name="Urrestarazu L.A."/>
            <person name="Ushinsky S."/>
            <person name="Vierendeels F."/>
            <person name="Vissers S."/>
            <person name="Voss H."/>
            <person name="Walsh S.V."/>
            <person name="Wambutt R."/>
            <person name="Wang Y."/>
            <person name="Wedler E."/>
            <person name="Wedler H."/>
            <person name="Winnett E."/>
            <person name="Zhong W.-W."/>
            <person name="Zollner A."/>
            <person name="Vo D.H."/>
            <person name="Hani J."/>
        </authorList>
    </citation>
    <scope>NUCLEOTIDE SEQUENCE [LARGE SCALE GENOMIC DNA]</scope>
    <source>
        <strain>ATCC 204508 / S288c</strain>
    </source>
</reference>
<reference key="2">
    <citation type="journal article" date="2014" name="G3 (Bethesda)">
        <title>The reference genome sequence of Saccharomyces cerevisiae: Then and now.</title>
        <authorList>
            <person name="Engel S.R."/>
            <person name="Dietrich F.S."/>
            <person name="Fisk D.G."/>
            <person name="Binkley G."/>
            <person name="Balakrishnan R."/>
            <person name="Costanzo M.C."/>
            <person name="Dwight S.S."/>
            <person name="Hitz B.C."/>
            <person name="Karra K."/>
            <person name="Nash R.S."/>
            <person name="Weng S."/>
            <person name="Wong E.D."/>
            <person name="Lloyd P."/>
            <person name="Skrzypek M.S."/>
            <person name="Miyasato S.R."/>
            <person name="Simison M."/>
            <person name="Cherry J.M."/>
        </authorList>
    </citation>
    <scope>GENOME REANNOTATION</scope>
    <source>
        <strain>ATCC 204508 / S288c</strain>
    </source>
</reference>
<reference key="3">
    <citation type="journal article" date="2003" name="Genome Res.">
        <title>Systematic discovery of new genes in the Saccharomyces cerevisiae genome.</title>
        <authorList>
            <person name="Kessler M.M."/>
            <person name="Zeng Q."/>
            <person name="Hogan S."/>
            <person name="Cook R."/>
            <person name="Morales A.J."/>
            <person name="Cottarel G."/>
        </authorList>
    </citation>
    <scope>GENOME REANNOTATION</scope>
</reference>
<accession>P0C5R7</accession>
<keyword id="KW-0472">Membrane</keyword>
<keyword id="KW-0812">Transmembrane</keyword>
<keyword id="KW-1133">Transmembrane helix</keyword>
<sequence length="72" mass="8063">MRPVVSTGKAWCCTVLSAFGVVILSVIAHLFNTNHESFVGSINDPEDGPAYVIFSYLFRRYPFTISYISPPY</sequence>
<feature type="chain" id="PRO_0000309065" description="Putative uncharacterized protein YPR169W-A">
    <location>
        <begin position="1"/>
        <end position="72"/>
    </location>
</feature>
<feature type="transmembrane region" description="Helical" evidence="1">
    <location>
        <begin position="11"/>
        <end position="31"/>
    </location>
</feature>
<name>YP169_YEAST</name>
<evidence type="ECO:0000255" key="1"/>
<evidence type="ECO:0000305" key="2"/>
<evidence type="ECO:0000305" key="3">
    <source>
    </source>
</evidence>
<proteinExistence type="uncertain"/>
<gene>
    <name type="ordered locus">YPR169W-A</name>
    <name type="ORF">smORF672</name>
</gene>
<protein>
    <recommendedName>
        <fullName>Putative uncharacterized protein YPR169W-A</fullName>
    </recommendedName>
</protein>